<dbReference type="EC" id="3.1.-.-" evidence="1"/>
<dbReference type="EMBL" id="X78627">
    <property type="protein sequence ID" value="CAA55341.1"/>
    <property type="molecule type" value="mRNA"/>
</dbReference>
<dbReference type="EMBL" id="BT019490">
    <property type="protein sequence ID" value="AAV38297.1"/>
    <property type="molecule type" value="mRNA"/>
</dbReference>
<dbReference type="EMBL" id="BT019491">
    <property type="protein sequence ID" value="AAV38298.1"/>
    <property type="molecule type" value="mRNA"/>
</dbReference>
<dbReference type="EMBL" id="AK296469">
    <property type="protein sequence ID" value="BAH12364.1"/>
    <property type="molecule type" value="mRNA"/>
</dbReference>
<dbReference type="EMBL" id="AC018737">
    <property type="protein sequence ID" value="AAY14831.1"/>
    <property type="molecule type" value="Genomic_DNA"/>
</dbReference>
<dbReference type="EMBL" id="BC002359">
    <property type="protein sequence ID" value="AAH02359.1"/>
    <property type="molecule type" value="mRNA"/>
</dbReference>
<dbReference type="EMBL" id="Y12563">
    <property type="protein sequence ID" value="CAA73150.1"/>
    <property type="molecule type" value="Genomic_DNA"/>
</dbReference>
<dbReference type="EMBL" id="Y12564">
    <property type="protein sequence ID" value="CAA73150.1"/>
    <property type="status" value="JOINED"/>
    <property type="molecule type" value="Genomic_DNA"/>
</dbReference>
<dbReference type="EMBL" id="Y12565">
    <property type="protein sequence ID" value="CAA73150.1"/>
    <property type="status" value="JOINED"/>
    <property type="molecule type" value="Genomic_DNA"/>
</dbReference>
<dbReference type="EMBL" id="Y12566">
    <property type="protein sequence ID" value="CAA73150.1"/>
    <property type="status" value="JOINED"/>
    <property type="molecule type" value="Genomic_DNA"/>
</dbReference>
<dbReference type="EMBL" id="Y12567">
    <property type="protein sequence ID" value="CAA73150.1"/>
    <property type="status" value="JOINED"/>
    <property type="molecule type" value="Genomic_DNA"/>
</dbReference>
<dbReference type="CCDS" id="CCDS33284.1">
    <molecule id="Q15631-1"/>
</dbReference>
<dbReference type="CCDS" id="CCDS58723.1">
    <molecule id="Q15631-2"/>
</dbReference>
<dbReference type="PIR" id="S51738">
    <property type="entry name" value="S51738"/>
</dbReference>
<dbReference type="RefSeq" id="NP_001248330.1">
    <molecule id="Q15631-2"/>
    <property type="nucleotide sequence ID" value="NM_001261401.2"/>
</dbReference>
<dbReference type="RefSeq" id="NP_004613.1">
    <molecule id="Q15631-1"/>
    <property type="nucleotide sequence ID" value="NM_004622.3"/>
</dbReference>
<dbReference type="PDB" id="1J1J">
    <property type="method" value="X-ray"/>
    <property type="resolution" value="2.20 A"/>
    <property type="chains" value="A/B/C/D=1-228"/>
</dbReference>
<dbReference type="PDB" id="3PJA">
    <property type="method" value="X-ray"/>
    <property type="resolution" value="3.00 A"/>
    <property type="chains" value="A/B/C/D/E/F/G/H/I=1-228"/>
</dbReference>
<dbReference type="PDB" id="3QB5">
    <property type="method" value="X-ray"/>
    <property type="resolution" value="2.95 A"/>
    <property type="chains" value="A/B/C=1-228"/>
</dbReference>
<dbReference type="PDB" id="4WYV">
    <property type="method" value="X-ray"/>
    <property type="resolution" value="3.00 A"/>
    <property type="chains" value="A/B/C/D/E/F/G/H=1-228"/>
</dbReference>
<dbReference type="PDBsum" id="1J1J"/>
<dbReference type="PDBsum" id="3PJA"/>
<dbReference type="PDBsum" id="3QB5"/>
<dbReference type="PDBsum" id="4WYV"/>
<dbReference type="EMDB" id="EMD-5892"/>
<dbReference type="SMR" id="Q15631"/>
<dbReference type="BioGRID" id="113098">
    <property type="interactions" value="107"/>
</dbReference>
<dbReference type="ComplexPortal" id="CPX-890">
    <property type="entry name" value="C3PO endoribonuclease complex"/>
</dbReference>
<dbReference type="CORUM" id="Q15631"/>
<dbReference type="DIP" id="DIP-42216N"/>
<dbReference type="FunCoup" id="Q15631">
    <property type="interactions" value="4644"/>
</dbReference>
<dbReference type="IntAct" id="Q15631">
    <property type="interactions" value="28"/>
</dbReference>
<dbReference type="MINT" id="Q15631"/>
<dbReference type="STRING" id="9606.ENSP00000374332"/>
<dbReference type="GlyCosmos" id="Q15631">
    <property type="glycosylation" value="1 site, 1 glycan"/>
</dbReference>
<dbReference type="GlyGen" id="Q15631">
    <property type="glycosylation" value="1 site, 1 O-linked glycan (1 site)"/>
</dbReference>
<dbReference type="iPTMnet" id="Q15631"/>
<dbReference type="PhosphoSitePlus" id="Q15631"/>
<dbReference type="BioMuta" id="TSN"/>
<dbReference type="DMDM" id="6136060"/>
<dbReference type="jPOST" id="Q15631"/>
<dbReference type="MassIVE" id="Q15631"/>
<dbReference type="PaxDb" id="9606-ENSP00000374332"/>
<dbReference type="PeptideAtlas" id="Q15631"/>
<dbReference type="ProteomicsDB" id="60665">
    <molecule id="Q15631-1"/>
</dbReference>
<dbReference type="ProteomicsDB" id="6554"/>
<dbReference type="Pumba" id="Q15631"/>
<dbReference type="TopDownProteomics" id="Q15631-1">
    <molecule id="Q15631-1"/>
</dbReference>
<dbReference type="Antibodypedia" id="33410">
    <property type="antibodies" value="229 antibodies from 34 providers"/>
</dbReference>
<dbReference type="DNASU" id="7247"/>
<dbReference type="Ensembl" id="ENST00000389682.8">
    <molecule id="Q15631-1"/>
    <property type="protein sequence ID" value="ENSP00000374332.3"/>
    <property type="gene ID" value="ENSG00000211460.12"/>
</dbReference>
<dbReference type="Ensembl" id="ENST00000536142.5">
    <molecule id="Q15631-2"/>
    <property type="protein sequence ID" value="ENSP00000437728.1"/>
    <property type="gene ID" value="ENSG00000211460.12"/>
</dbReference>
<dbReference type="GeneID" id="7247"/>
<dbReference type="KEGG" id="hsa:7247"/>
<dbReference type="MANE-Select" id="ENST00000389682.8">
    <property type="protein sequence ID" value="ENSP00000374332.3"/>
    <property type="RefSeq nucleotide sequence ID" value="NM_004622.3"/>
    <property type="RefSeq protein sequence ID" value="NP_004613.1"/>
</dbReference>
<dbReference type="UCSC" id="uc002tnl.4">
    <molecule id="Q15631-1"/>
    <property type="organism name" value="human"/>
</dbReference>
<dbReference type="AGR" id="HGNC:12379"/>
<dbReference type="CTD" id="7247"/>
<dbReference type="DisGeNET" id="7247"/>
<dbReference type="GeneCards" id="TSN"/>
<dbReference type="HGNC" id="HGNC:12379">
    <property type="gene designation" value="TSN"/>
</dbReference>
<dbReference type="HPA" id="ENSG00000211460">
    <property type="expression patterns" value="Low tissue specificity"/>
</dbReference>
<dbReference type="MIM" id="600575">
    <property type="type" value="gene"/>
</dbReference>
<dbReference type="neXtProt" id="NX_Q15631"/>
<dbReference type="OpenTargets" id="ENSG00000211460"/>
<dbReference type="PharmGKB" id="PA37047"/>
<dbReference type="VEuPathDB" id="HostDB:ENSG00000211460"/>
<dbReference type="eggNOG" id="KOG3067">
    <property type="taxonomic scope" value="Eukaryota"/>
</dbReference>
<dbReference type="GeneTree" id="ENSGT00940000153568"/>
<dbReference type="HOGENOM" id="CLU_079179_0_0_1"/>
<dbReference type="InParanoid" id="Q15631"/>
<dbReference type="OMA" id="DAFHFTI"/>
<dbReference type="OrthoDB" id="829at2759"/>
<dbReference type="PAN-GO" id="Q15631">
    <property type="GO annotations" value="3 GO annotations based on evolutionary models"/>
</dbReference>
<dbReference type="PhylomeDB" id="Q15631"/>
<dbReference type="TreeFam" id="TF323690"/>
<dbReference type="PathwayCommons" id="Q15631"/>
<dbReference type="Reactome" id="R-HSA-426486">
    <property type="pathway name" value="Small interfering RNA (siRNA) biogenesis"/>
</dbReference>
<dbReference type="SignaLink" id="Q15631"/>
<dbReference type="BioGRID-ORCS" id="7247">
    <property type="hits" value="10 hits in 1157 CRISPR screens"/>
</dbReference>
<dbReference type="ChiTaRS" id="TSN">
    <property type="organism name" value="human"/>
</dbReference>
<dbReference type="EvolutionaryTrace" id="Q15631"/>
<dbReference type="GeneWiki" id="TSN_(gene)"/>
<dbReference type="GenomeRNAi" id="7247"/>
<dbReference type="Pharos" id="Q15631">
    <property type="development level" value="Tbio"/>
</dbReference>
<dbReference type="PRO" id="PR:Q15631"/>
<dbReference type="Proteomes" id="UP000005640">
    <property type="component" value="Chromosome 2"/>
</dbReference>
<dbReference type="RNAct" id="Q15631">
    <property type="molecule type" value="protein"/>
</dbReference>
<dbReference type="Bgee" id="ENSG00000211460">
    <property type="expression patterns" value="Expressed in primordial germ cell in gonad and 216 other cell types or tissues"/>
</dbReference>
<dbReference type="ExpressionAtlas" id="Q15631">
    <property type="expression patterns" value="baseline and differential"/>
</dbReference>
<dbReference type="GO" id="GO:0005737">
    <property type="term" value="C:cytoplasm"/>
    <property type="evidence" value="ECO:0000318"/>
    <property type="project" value="GO_Central"/>
</dbReference>
<dbReference type="GO" id="GO:0005829">
    <property type="term" value="C:cytosol"/>
    <property type="evidence" value="ECO:0000304"/>
    <property type="project" value="Reactome"/>
</dbReference>
<dbReference type="GO" id="GO:0005783">
    <property type="term" value="C:endoplasmic reticulum"/>
    <property type="evidence" value="ECO:0000314"/>
    <property type="project" value="HPA"/>
</dbReference>
<dbReference type="GO" id="GO:1902555">
    <property type="term" value="C:endoribonuclease complex"/>
    <property type="evidence" value="ECO:0000353"/>
    <property type="project" value="ComplexPortal"/>
</dbReference>
<dbReference type="GO" id="GO:0001673">
    <property type="term" value="C:male germ cell nucleus"/>
    <property type="evidence" value="ECO:0007669"/>
    <property type="project" value="Ensembl"/>
</dbReference>
<dbReference type="GO" id="GO:0005654">
    <property type="term" value="C:nucleoplasm"/>
    <property type="evidence" value="ECO:0000314"/>
    <property type="project" value="HPA"/>
</dbReference>
<dbReference type="GO" id="GO:0005634">
    <property type="term" value="C:nucleus"/>
    <property type="evidence" value="ECO:0000318"/>
    <property type="project" value="GO_Central"/>
</dbReference>
<dbReference type="GO" id="GO:0003677">
    <property type="term" value="F:DNA binding"/>
    <property type="evidence" value="ECO:0000304"/>
    <property type="project" value="ProtInc"/>
</dbReference>
<dbReference type="GO" id="GO:0004519">
    <property type="term" value="F:endonuclease activity"/>
    <property type="evidence" value="ECO:0007669"/>
    <property type="project" value="UniProtKB-KW"/>
</dbReference>
<dbReference type="GO" id="GO:0042802">
    <property type="term" value="F:identical protein binding"/>
    <property type="evidence" value="ECO:0000353"/>
    <property type="project" value="IntAct"/>
</dbReference>
<dbReference type="GO" id="GO:0003729">
    <property type="term" value="F:mRNA binding"/>
    <property type="evidence" value="ECO:0007669"/>
    <property type="project" value="Ensembl"/>
</dbReference>
<dbReference type="GO" id="GO:0003723">
    <property type="term" value="F:RNA binding"/>
    <property type="evidence" value="ECO:0000318"/>
    <property type="project" value="GO_Central"/>
</dbReference>
<dbReference type="GO" id="GO:0043565">
    <property type="term" value="F:sequence-specific DNA binding"/>
    <property type="evidence" value="ECO:0007669"/>
    <property type="project" value="InterPro"/>
</dbReference>
<dbReference type="GO" id="GO:0003697">
    <property type="term" value="F:single-stranded DNA binding"/>
    <property type="evidence" value="ECO:0007669"/>
    <property type="project" value="InterPro"/>
</dbReference>
<dbReference type="GO" id="GO:0035194">
    <property type="term" value="P:regulatory ncRNA-mediated post-transcriptional gene silencing"/>
    <property type="evidence" value="ECO:0000303"/>
    <property type="project" value="ComplexPortal"/>
</dbReference>
<dbReference type="GO" id="GO:0030422">
    <property type="term" value="P:siRNA processing"/>
    <property type="evidence" value="ECO:0000314"/>
    <property type="project" value="ComplexPortal"/>
</dbReference>
<dbReference type="CDD" id="cd14819">
    <property type="entry name" value="Translin"/>
    <property type="match status" value="1"/>
</dbReference>
<dbReference type="DisProt" id="DP02701"/>
<dbReference type="FunFam" id="1.20.58.200:FF:000002">
    <property type="entry name" value="Putative translin"/>
    <property type="match status" value="1"/>
</dbReference>
<dbReference type="FunFam" id="1.20.58.190:FF:000001">
    <property type="entry name" value="Translin"/>
    <property type="match status" value="1"/>
</dbReference>
<dbReference type="Gene3D" id="1.20.58.190">
    <property type="entry name" value="Translin, domain 1"/>
    <property type="match status" value="1"/>
</dbReference>
<dbReference type="Gene3D" id="1.20.58.200">
    <property type="entry name" value="Translin, domain 2"/>
    <property type="match status" value="1"/>
</dbReference>
<dbReference type="InterPro" id="IPR033956">
    <property type="entry name" value="Translin"/>
</dbReference>
<dbReference type="InterPro" id="IPR016069">
    <property type="entry name" value="Translin_C"/>
</dbReference>
<dbReference type="InterPro" id="IPR002848">
    <property type="entry name" value="Translin_fam"/>
</dbReference>
<dbReference type="InterPro" id="IPR016068">
    <property type="entry name" value="Translin_N"/>
</dbReference>
<dbReference type="InterPro" id="IPR036081">
    <property type="entry name" value="Translin_sf"/>
</dbReference>
<dbReference type="PANTHER" id="PTHR10741">
    <property type="entry name" value="TRANSLIN AND TRANSLIN ASSOCIATED PROTEIN X"/>
    <property type="match status" value="1"/>
</dbReference>
<dbReference type="Pfam" id="PF01997">
    <property type="entry name" value="Translin"/>
    <property type="match status" value="1"/>
</dbReference>
<dbReference type="SUPFAM" id="SSF74784">
    <property type="entry name" value="Translin"/>
    <property type="match status" value="1"/>
</dbReference>
<keyword id="KW-0002">3D-structure</keyword>
<keyword id="KW-0007">Acetylation</keyword>
<keyword id="KW-0025">Alternative splicing</keyword>
<keyword id="KW-0963">Cytoplasm</keyword>
<keyword id="KW-0238">DNA-binding</keyword>
<keyword id="KW-0255">Endonuclease</keyword>
<keyword id="KW-0378">Hydrolase</keyword>
<keyword id="KW-0540">Nuclease</keyword>
<keyword id="KW-0539">Nucleus</keyword>
<keyword id="KW-0597">Phosphoprotein</keyword>
<keyword id="KW-1267">Proteomics identification</keyword>
<keyword id="KW-1185">Reference proteome</keyword>
<keyword id="KW-0694">RNA-binding</keyword>
<feature type="chain" id="PRO_0000191683" description="Translin">
    <location>
        <begin position="1"/>
        <end position="228"/>
    </location>
</feature>
<feature type="region of interest" description="DNA/RNA binding">
    <location>
        <begin position="86"/>
        <end position="90"/>
    </location>
</feature>
<feature type="region of interest" description="Leucine-zipper" evidence="2">
    <location>
        <begin position="177"/>
        <end position="198"/>
    </location>
</feature>
<feature type="modified residue" description="N6-acetyllysine" evidence="10">
    <location>
        <position position="187"/>
    </location>
</feature>
<feature type="modified residue" description="Phosphoserine" evidence="11">
    <location>
        <position position="190"/>
    </location>
</feature>
<feature type="modified residue" description="N6-acetyllysine" evidence="10">
    <location>
        <position position="199"/>
    </location>
</feature>
<feature type="splice variant" id="VSP_044937" description="In isoform 2." evidence="6">
    <original>PDREKGFHLDVEDYLSGVLILA</original>
    <variation>AVCQQRDCWRLLPTPPHLHLHQ</variation>
    <location>
        <begin position="127"/>
        <end position="148"/>
    </location>
</feature>
<feature type="splice variant" id="VSP_044938" description="In isoform 2." evidence="6">
    <location>
        <begin position="149"/>
        <end position="228"/>
    </location>
</feature>
<feature type="helix" evidence="12">
    <location>
        <begin position="3"/>
        <end position="42"/>
    </location>
</feature>
<feature type="helix" evidence="12">
    <location>
        <begin position="43"/>
        <end position="46"/>
    </location>
</feature>
<feature type="strand" evidence="12">
    <location>
        <begin position="47"/>
        <end position="51"/>
    </location>
</feature>
<feature type="helix" evidence="12">
    <location>
        <begin position="54"/>
        <end position="77"/>
    </location>
</feature>
<feature type="helix" evidence="12">
    <location>
        <begin position="81"/>
        <end position="83"/>
    </location>
</feature>
<feature type="helix" evidence="12">
    <location>
        <begin position="84"/>
        <end position="87"/>
    </location>
</feature>
<feature type="helix" evidence="12">
    <location>
        <begin position="88"/>
        <end position="90"/>
    </location>
</feature>
<feature type="helix" evidence="12">
    <location>
        <begin position="92"/>
        <end position="110"/>
    </location>
</feature>
<feature type="helix" evidence="12">
    <location>
        <begin position="116"/>
        <end position="123"/>
    </location>
</feature>
<feature type="strand" evidence="12">
    <location>
        <begin position="128"/>
        <end position="133"/>
    </location>
</feature>
<feature type="helix" evidence="12">
    <location>
        <begin position="137"/>
        <end position="160"/>
    </location>
</feature>
<feature type="helix" evidence="12">
    <location>
        <begin position="166"/>
        <end position="181"/>
    </location>
</feature>
<feature type="helix" evidence="12">
    <location>
        <begin position="189"/>
        <end position="195"/>
    </location>
</feature>
<feature type="helix" evidence="12">
    <location>
        <begin position="198"/>
        <end position="213"/>
    </location>
</feature>
<feature type="turn" evidence="12">
    <location>
        <begin position="214"/>
        <end position="216"/>
    </location>
</feature>
<accession>Q15631</accession>
<accession>B7Z3X8</accession>
<accession>Q5U0K7</accession>
<reference key="1">
    <citation type="journal article" date="1995" name="Nat. Genet.">
        <title>A novel gene, Translin, encodes a recombination hotspot binding protein associated with chromosomal translocations.</title>
        <authorList>
            <person name="Aoki K."/>
            <person name="Suzuki K."/>
            <person name="Sugano T."/>
            <person name="Tasaka T."/>
            <person name="Nakahara K."/>
            <person name="Kuge O."/>
            <person name="Omori A."/>
            <person name="Kasai M."/>
        </authorList>
    </citation>
    <scope>NUCLEOTIDE SEQUENCE [MRNA] (ISOFORM 1)</scope>
</reference>
<reference key="2">
    <citation type="submission" date="2003-05" db="EMBL/GenBank/DDBJ databases">
        <title>Cloning of human full-length CDSs in BD Creator(TM) system donor vector.</title>
        <authorList>
            <person name="Kalnine N."/>
            <person name="Chen X."/>
            <person name="Rolfs A."/>
            <person name="Halleck A."/>
            <person name="Hines L."/>
            <person name="Eisenstein S."/>
            <person name="Koundinya M."/>
            <person name="Raphael J."/>
            <person name="Moreira D."/>
            <person name="Kelley T."/>
            <person name="LaBaer J."/>
            <person name="Lin Y."/>
            <person name="Phelan M."/>
            <person name="Farmer A."/>
        </authorList>
    </citation>
    <scope>NUCLEOTIDE SEQUENCE [LARGE SCALE MRNA] (ISOFORM 1)</scope>
</reference>
<reference key="3">
    <citation type="journal article" date="2004" name="Nat. Genet.">
        <title>Complete sequencing and characterization of 21,243 full-length human cDNAs.</title>
        <authorList>
            <person name="Ota T."/>
            <person name="Suzuki Y."/>
            <person name="Nishikawa T."/>
            <person name="Otsuki T."/>
            <person name="Sugiyama T."/>
            <person name="Irie R."/>
            <person name="Wakamatsu A."/>
            <person name="Hayashi K."/>
            <person name="Sato H."/>
            <person name="Nagai K."/>
            <person name="Kimura K."/>
            <person name="Makita H."/>
            <person name="Sekine M."/>
            <person name="Obayashi M."/>
            <person name="Nishi T."/>
            <person name="Shibahara T."/>
            <person name="Tanaka T."/>
            <person name="Ishii S."/>
            <person name="Yamamoto J."/>
            <person name="Saito K."/>
            <person name="Kawai Y."/>
            <person name="Isono Y."/>
            <person name="Nakamura Y."/>
            <person name="Nagahari K."/>
            <person name="Murakami K."/>
            <person name="Yasuda T."/>
            <person name="Iwayanagi T."/>
            <person name="Wagatsuma M."/>
            <person name="Shiratori A."/>
            <person name="Sudo H."/>
            <person name="Hosoiri T."/>
            <person name="Kaku Y."/>
            <person name="Kodaira H."/>
            <person name="Kondo H."/>
            <person name="Sugawara M."/>
            <person name="Takahashi M."/>
            <person name="Kanda K."/>
            <person name="Yokoi T."/>
            <person name="Furuya T."/>
            <person name="Kikkawa E."/>
            <person name="Omura Y."/>
            <person name="Abe K."/>
            <person name="Kamihara K."/>
            <person name="Katsuta N."/>
            <person name="Sato K."/>
            <person name="Tanikawa M."/>
            <person name="Yamazaki M."/>
            <person name="Ninomiya K."/>
            <person name="Ishibashi T."/>
            <person name="Yamashita H."/>
            <person name="Murakawa K."/>
            <person name="Fujimori K."/>
            <person name="Tanai H."/>
            <person name="Kimata M."/>
            <person name="Watanabe M."/>
            <person name="Hiraoka S."/>
            <person name="Chiba Y."/>
            <person name="Ishida S."/>
            <person name="Ono Y."/>
            <person name="Takiguchi S."/>
            <person name="Watanabe S."/>
            <person name="Yosida M."/>
            <person name="Hotuta T."/>
            <person name="Kusano J."/>
            <person name="Kanehori K."/>
            <person name="Takahashi-Fujii A."/>
            <person name="Hara H."/>
            <person name="Tanase T.-O."/>
            <person name="Nomura Y."/>
            <person name="Togiya S."/>
            <person name="Komai F."/>
            <person name="Hara R."/>
            <person name="Takeuchi K."/>
            <person name="Arita M."/>
            <person name="Imose N."/>
            <person name="Musashino K."/>
            <person name="Yuuki H."/>
            <person name="Oshima A."/>
            <person name="Sasaki N."/>
            <person name="Aotsuka S."/>
            <person name="Yoshikawa Y."/>
            <person name="Matsunawa H."/>
            <person name="Ichihara T."/>
            <person name="Shiohata N."/>
            <person name="Sano S."/>
            <person name="Moriya S."/>
            <person name="Momiyama H."/>
            <person name="Satoh N."/>
            <person name="Takami S."/>
            <person name="Terashima Y."/>
            <person name="Suzuki O."/>
            <person name="Nakagawa S."/>
            <person name="Senoh A."/>
            <person name="Mizoguchi H."/>
            <person name="Goto Y."/>
            <person name="Shimizu F."/>
            <person name="Wakebe H."/>
            <person name="Hishigaki H."/>
            <person name="Watanabe T."/>
            <person name="Sugiyama A."/>
            <person name="Takemoto M."/>
            <person name="Kawakami B."/>
            <person name="Yamazaki M."/>
            <person name="Watanabe K."/>
            <person name="Kumagai A."/>
            <person name="Itakura S."/>
            <person name="Fukuzumi Y."/>
            <person name="Fujimori Y."/>
            <person name="Komiyama M."/>
            <person name="Tashiro H."/>
            <person name="Tanigami A."/>
            <person name="Fujiwara T."/>
            <person name="Ono T."/>
            <person name="Yamada K."/>
            <person name="Fujii Y."/>
            <person name="Ozaki K."/>
            <person name="Hirao M."/>
            <person name="Ohmori Y."/>
            <person name="Kawabata A."/>
            <person name="Hikiji T."/>
            <person name="Kobatake N."/>
            <person name="Inagaki H."/>
            <person name="Ikema Y."/>
            <person name="Okamoto S."/>
            <person name="Okitani R."/>
            <person name="Kawakami T."/>
            <person name="Noguchi S."/>
            <person name="Itoh T."/>
            <person name="Shigeta K."/>
            <person name="Senba T."/>
            <person name="Matsumura K."/>
            <person name="Nakajima Y."/>
            <person name="Mizuno T."/>
            <person name="Morinaga M."/>
            <person name="Sasaki M."/>
            <person name="Togashi T."/>
            <person name="Oyama M."/>
            <person name="Hata H."/>
            <person name="Watanabe M."/>
            <person name="Komatsu T."/>
            <person name="Mizushima-Sugano J."/>
            <person name="Satoh T."/>
            <person name="Shirai Y."/>
            <person name="Takahashi Y."/>
            <person name="Nakagawa K."/>
            <person name="Okumura K."/>
            <person name="Nagase T."/>
            <person name="Nomura N."/>
            <person name="Kikuchi H."/>
            <person name="Masuho Y."/>
            <person name="Yamashita R."/>
            <person name="Nakai K."/>
            <person name="Yada T."/>
            <person name="Nakamura Y."/>
            <person name="Ohara O."/>
            <person name="Isogai T."/>
            <person name="Sugano S."/>
        </authorList>
    </citation>
    <scope>NUCLEOTIDE SEQUENCE [LARGE SCALE MRNA] (ISOFORM 2)</scope>
    <source>
        <tissue>Thalamus</tissue>
    </source>
</reference>
<reference key="4">
    <citation type="journal article" date="2005" name="Nature">
        <title>Generation and annotation of the DNA sequences of human chromosomes 2 and 4.</title>
        <authorList>
            <person name="Hillier L.W."/>
            <person name="Graves T.A."/>
            <person name="Fulton R.S."/>
            <person name="Fulton L.A."/>
            <person name="Pepin K.H."/>
            <person name="Minx P."/>
            <person name="Wagner-McPherson C."/>
            <person name="Layman D."/>
            <person name="Wylie K."/>
            <person name="Sekhon M."/>
            <person name="Becker M.C."/>
            <person name="Fewell G.A."/>
            <person name="Delehaunty K.D."/>
            <person name="Miner T.L."/>
            <person name="Nash W.E."/>
            <person name="Kremitzki C."/>
            <person name="Oddy L."/>
            <person name="Du H."/>
            <person name="Sun H."/>
            <person name="Bradshaw-Cordum H."/>
            <person name="Ali J."/>
            <person name="Carter J."/>
            <person name="Cordes M."/>
            <person name="Harris A."/>
            <person name="Isak A."/>
            <person name="van Brunt A."/>
            <person name="Nguyen C."/>
            <person name="Du F."/>
            <person name="Courtney L."/>
            <person name="Kalicki J."/>
            <person name="Ozersky P."/>
            <person name="Abbott S."/>
            <person name="Armstrong J."/>
            <person name="Belter E.A."/>
            <person name="Caruso L."/>
            <person name="Cedroni M."/>
            <person name="Cotton M."/>
            <person name="Davidson T."/>
            <person name="Desai A."/>
            <person name="Elliott G."/>
            <person name="Erb T."/>
            <person name="Fronick C."/>
            <person name="Gaige T."/>
            <person name="Haakenson W."/>
            <person name="Haglund K."/>
            <person name="Holmes A."/>
            <person name="Harkins R."/>
            <person name="Kim K."/>
            <person name="Kruchowski S.S."/>
            <person name="Strong C.M."/>
            <person name="Grewal N."/>
            <person name="Goyea E."/>
            <person name="Hou S."/>
            <person name="Levy A."/>
            <person name="Martinka S."/>
            <person name="Mead K."/>
            <person name="McLellan M.D."/>
            <person name="Meyer R."/>
            <person name="Randall-Maher J."/>
            <person name="Tomlinson C."/>
            <person name="Dauphin-Kohlberg S."/>
            <person name="Kozlowicz-Reilly A."/>
            <person name="Shah N."/>
            <person name="Swearengen-Shahid S."/>
            <person name="Snider J."/>
            <person name="Strong J.T."/>
            <person name="Thompson J."/>
            <person name="Yoakum M."/>
            <person name="Leonard S."/>
            <person name="Pearman C."/>
            <person name="Trani L."/>
            <person name="Radionenko M."/>
            <person name="Waligorski J.E."/>
            <person name="Wang C."/>
            <person name="Rock S.M."/>
            <person name="Tin-Wollam A.-M."/>
            <person name="Maupin R."/>
            <person name="Latreille P."/>
            <person name="Wendl M.C."/>
            <person name="Yang S.-P."/>
            <person name="Pohl C."/>
            <person name="Wallis J.W."/>
            <person name="Spieth J."/>
            <person name="Bieri T.A."/>
            <person name="Berkowicz N."/>
            <person name="Nelson J.O."/>
            <person name="Osborne J."/>
            <person name="Ding L."/>
            <person name="Meyer R."/>
            <person name="Sabo A."/>
            <person name="Shotland Y."/>
            <person name="Sinha P."/>
            <person name="Wohldmann P.E."/>
            <person name="Cook L.L."/>
            <person name="Hickenbotham M.T."/>
            <person name="Eldred J."/>
            <person name="Williams D."/>
            <person name="Jones T.A."/>
            <person name="She X."/>
            <person name="Ciccarelli F.D."/>
            <person name="Izaurralde E."/>
            <person name="Taylor J."/>
            <person name="Schmutz J."/>
            <person name="Myers R.M."/>
            <person name="Cox D.R."/>
            <person name="Huang X."/>
            <person name="McPherson J.D."/>
            <person name="Mardis E.R."/>
            <person name="Clifton S.W."/>
            <person name="Warren W.C."/>
            <person name="Chinwalla A.T."/>
            <person name="Eddy S.R."/>
            <person name="Marra M.A."/>
            <person name="Ovcharenko I."/>
            <person name="Furey T.S."/>
            <person name="Miller W."/>
            <person name="Eichler E.E."/>
            <person name="Bork P."/>
            <person name="Suyama M."/>
            <person name="Torrents D."/>
            <person name="Waterston R.H."/>
            <person name="Wilson R.K."/>
        </authorList>
    </citation>
    <scope>NUCLEOTIDE SEQUENCE [LARGE SCALE GENOMIC DNA]</scope>
</reference>
<reference key="5">
    <citation type="journal article" date="2004" name="Genome Res.">
        <title>The status, quality, and expansion of the NIH full-length cDNA project: the Mammalian Gene Collection (MGC).</title>
        <authorList>
            <consortium name="The MGC Project Team"/>
        </authorList>
    </citation>
    <scope>NUCLEOTIDE SEQUENCE [LARGE SCALE MRNA] (ISOFORM 1)</scope>
    <source>
        <tissue>Lung</tissue>
    </source>
</reference>
<reference key="6">
    <citation type="journal article" date="1997" name="Genomics">
        <title>Genomic structure and chromosomal localization of the gene encoding translin, a recombination hotspot binding protein.</title>
        <authorList>
            <person name="Aoki K."/>
            <person name="Inazawa J."/>
            <person name="Takahashi T."/>
            <person name="Nakahara K."/>
            <person name="Kasai M."/>
        </authorList>
    </citation>
    <scope>NUCLEOTIDE SEQUENCE [GENOMIC DNA] OF 23-215</scope>
</reference>
<reference key="7">
    <citation type="journal article" date="1997" name="J. Biol. Chem.">
        <title>The translin ring specifically recognizes DNA ends at recombination hot spots in the human genome.</title>
        <authorList>
            <person name="Kasai M."/>
            <person name="Matsuzaki T."/>
            <person name="Katayanagi K."/>
            <person name="Omori A."/>
            <person name="Maziarz R.T."/>
            <person name="Strominger J.L."/>
            <person name="Aoki K."/>
            <person name="Suzuki K."/>
        </authorList>
    </citation>
    <scope>FUNCTION</scope>
</reference>
<reference key="8">
    <citation type="journal article" date="1999" name="FEBS Lett.">
        <title>The DNA binding activity of Translin is mediated by a basic region in the ring-shaped structure conserved in evolution.</title>
        <authorList>
            <person name="Aoki K."/>
            <person name="Suzuki K."/>
            <person name="Ishida R."/>
            <person name="Kasai M."/>
        </authorList>
    </citation>
    <scope>DNA/RNA-BINDING REGION</scope>
</reference>
<reference key="9">
    <citation type="journal article" date="2002" name="J. Cell Sci.">
        <title>DNA damage-dependent interaction of the nuclear matrix protein C1D with Translin-associated factor X (TRAX).</title>
        <authorList>
            <person name="Erdemir T."/>
            <person name="Bilican B."/>
            <person name="Oncel D."/>
            <person name="Goding C.R."/>
            <person name="Yavuzer U."/>
        </authorList>
    </citation>
    <scope>SUBCELLULAR LOCATION</scope>
    <scope>INTERACTION WITH TSNAX</scope>
</reference>
<reference key="10">
    <citation type="journal article" date="2009" name="Science">
        <title>Lysine acetylation targets protein complexes and co-regulates major cellular functions.</title>
        <authorList>
            <person name="Choudhary C."/>
            <person name="Kumar C."/>
            <person name="Gnad F."/>
            <person name="Nielsen M.L."/>
            <person name="Rehman M."/>
            <person name="Walther T.C."/>
            <person name="Olsen J.V."/>
            <person name="Mann M."/>
        </authorList>
    </citation>
    <scope>ACETYLATION [LARGE SCALE ANALYSIS] AT LYS-187 AND LYS-199</scope>
    <scope>IDENTIFICATION BY MASS SPECTROMETRY [LARGE SCALE ANALYSIS]</scope>
</reference>
<reference key="11">
    <citation type="journal article" date="2011" name="BMC Syst. Biol.">
        <title>Initial characterization of the human central proteome.</title>
        <authorList>
            <person name="Burkard T.R."/>
            <person name="Planyavsky M."/>
            <person name="Kaupe I."/>
            <person name="Breitwieser F.P."/>
            <person name="Buerckstuemmer T."/>
            <person name="Bennett K.L."/>
            <person name="Superti-Furga G."/>
            <person name="Colinge J."/>
        </authorList>
    </citation>
    <scope>IDENTIFICATION BY MASS SPECTROMETRY [LARGE SCALE ANALYSIS]</scope>
</reference>
<reference key="12">
    <citation type="journal article" date="2013" name="J. Proteome Res.">
        <title>Toward a comprehensive characterization of a human cancer cell phosphoproteome.</title>
        <authorList>
            <person name="Zhou H."/>
            <person name="Di Palma S."/>
            <person name="Preisinger C."/>
            <person name="Peng M."/>
            <person name="Polat A.N."/>
            <person name="Heck A.J."/>
            <person name="Mohammed S."/>
        </authorList>
    </citation>
    <scope>PHOSPHORYLATION [LARGE SCALE ANALYSIS] AT SER-190</scope>
    <scope>IDENTIFICATION BY MASS SPECTROMETRY [LARGE SCALE ANALYSIS]</scope>
    <source>
        <tissue>Erythroleukemia</tissue>
    </source>
</reference>
<reference key="13">
    <citation type="journal article" date="2015" name="Proteomics">
        <title>N-terminome analysis of the human mitochondrial proteome.</title>
        <authorList>
            <person name="Vaca Jacome A.S."/>
            <person name="Rabilloud T."/>
            <person name="Schaeffer-Reiss C."/>
            <person name="Rompais M."/>
            <person name="Ayoub D."/>
            <person name="Lane L."/>
            <person name="Bairoch A."/>
            <person name="Van Dorsselaer A."/>
            <person name="Carapito C."/>
        </authorList>
    </citation>
    <scope>IDENTIFICATION BY MASS SPECTROMETRY [LARGE SCALE ANALYSIS]</scope>
</reference>
<reference key="14">
    <citation type="journal article" date="2011" name="Nat. Struct. Mol. Biol.">
        <title>Structure of C3PO and mechanism of human RISC activation.</title>
        <authorList>
            <person name="Ye X."/>
            <person name="Huang N."/>
            <person name="Liu Y."/>
            <person name="Paroo Z."/>
            <person name="Huerta C."/>
            <person name="Li P."/>
            <person name="Chen S."/>
            <person name="Liu Q."/>
            <person name="Zhang H."/>
        </authorList>
    </citation>
    <scope>X-RAY CRYSTALLOGRAPHY (2.95 ANGSTROMS) IN COMPLEX WITH TSNAX</scope>
    <scope>FUNCTION IN RISC ACTIVATION</scope>
    <scope>SUBUNIT</scope>
</reference>
<organism>
    <name type="scientific">Homo sapiens</name>
    <name type="common">Human</name>
    <dbReference type="NCBI Taxonomy" id="9606"/>
    <lineage>
        <taxon>Eukaryota</taxon>
        <taxon>Metazoa</taxon>
        <taxon>Chordata</taxon>
        <taxon>Craniata</taxon>
        <taxon>Vertebrata</taxon>
        <taxon>Euteleostomi</taxon>
        <taxon>Mammalia</taxon>
        <taxon>Eutheria</taxon>
        <taxon>Euarchontoglires</taxon>
        <taxon>Primates</taxon>
        <taxon>Haplorrhini</taxon>
        <taxon>Catarrhini</taxon>
        <taxon>Hominidae</taxon>
        <taxon>Homo</taxon>
    </lineage>
</organism>
<name>TSN_HUMAN</name>
<evidence type="ECO:0000250" key="1">
    <source>
        <dbReference type="UniProtKB" id="Q62348"/>
    </source>
</evidence>
<evidence type="ECO:0000255" key="2"/>
<evidence type="ECO:0000269" key="3">
    <source>
    </source>
</evidence>
<evidence type="ECO:0000269" key="4">
    <source>
    </source>
</evidence>
<evidence type="ECO:0000269" key="5">
    <source>
    </source>
</evidence>
<evidence type="ECO:0000303" key="6">
    <source>
    </source>
</evidence>
<evidence type="ECO:0000303" key="7">
    <source>
    </source>
</evidence>
<evidence type="ECO:0000305" key="8"/>
<evidence type="ECO:0000312" key="9">
    <source>
        <dbReference type="HGNC" id="HGNC:12379"/>
    </source>
</evidence>
<evidence type="ECO:0007744" key="10">
    <source>
    </source>
</evidence>
<evidence type="ECO:0007744" key="11">
    <source>
    </source>
</evidence>
<evidence type="ECO:0007829" key="12">
    <source>
        <dbReference type="PDB" id="1J1J"/>
    </source>
</evidence>
<proteinExistence type="evidence at protein level"/>
<comment type="function">
    <text evidence="5">DNA-binding protein that specifically recognizes consensus sequences at the breakpoint junctions in chromosomal translocations, mostly involving immunoglobulin (Ig)/T-cell receptor gene segments. Seems to recognize single-stranded DNA ends generated by staggered breaks occurring at recombination hot spots.</text>
</comment>
<comment type="function">
    <text evidence="4">Exhibits both single-stranded and double-stranded endoribonuclease activity. May act as an activator of RNA-induced silencing complex (RISC) by facilitating endonucleolytic cleavage of the siRNA passenger strand.</text>
</comment>
<comment type="subunit">
    <text evidence="3 4">Ring-shaped heterooctamer of six TSN and two TSNAX subunits, DNA/RNA binding occurs inside the ring.</text>
</comment>
<comment type="interaction">
    <interactant intactId="EBI-1044160">
        <id>Q15631</id>
    </interactant>
    <interactant intactId="EBI-739789">
        <id>Q92997</id>
        <label>DVL3</label>
    </interactant>
    <organismsDiffer>false</organismsDiffer>
    <experiments>3</experiments>
</comment>
<comment type="interaction">
    <interactant intactId="EBI-1044160">
        <id>Q15631</id>
    </interactant>
    <interactant intactId="EBI-1046878">
        <id>Q14161</id>
        <label>GIT2</label>
    </interactant>
    <organismsDiffer>false</organismsDiffer>
    <experiments>2</experiments>
</comment>
<comment type="interaction">
    <interactant intactId="EBI-1044160">
        <id>Q15631</id>
    </interactant>
    <interactant intactId="EBI-739467">
        <id>Q9H8Y8</id>
        <label>GORASP2</label>
    </interactant>
    <organismsDiffer>false</organismsDiffer>
    <experiments>6</experiments>
</comment>
<comment type="interaction">
    <interactant intactId="EBI-1044160">
        <id>Q15631</id>
    </interactant>
    <interactant intactId="EBI-739832">
        <id>Q8TBB1</id>
        <label>LNX1</label>
    </interactant>
    <organismsDiffer>false</organismsDiffer>
    <experiments>3</experiments>
</comment>
<comment type="interaction">
    <interactant intactId="EBI-1044160">
        <id>Q15631</id>
    </interactant>
    <interactant intactId="EBI-399257">
        <id>Q15014</id>
        <label>MORF4L2</label>
    </interactant>
    <organismsDiffer>false</organismsDiffer>
    <experiments>3</experiments>
</comment>
<comment type="interaction">
    <interactant intactId="EBI-1044160">
        <id>Q15631</id>
    </interactant>
    <interactant intactId="EBI-741158">
        <id>Q96HA8</id>
        <label>NTAQ1</label>
    </interactant>
    <organismsDiffer>false</organismsDiffer>
    <experiments>3</experiments>
</comment>
<comment type="interaction">
    <interactant intactId="EBI-1044160">
        <id>Q15631</id>
    </interactant>
    <interactant intactId="EBI-79165">
        <id>Q9NRD5</id>
        <label>PICK1</label>
    </interactant>
    <organismsDiffer>false</organismsDiffer>
    <experiments>3</experiments>
</comment>
<comment type="interaction">
    <interactant intactId="EBI-1044160">
        <id>Q15631</id>
    </interactant>
    <interactant intactId="EBI-727004">
        <id>O00560</id>
        <label>SDCBP</label>
    </interactant>
    <organismsDiffer>false</organismsDiffer>
    <experiments>3</experiments>
</comment>
<comment type="interaction">
    <interactant intactId="EBI-1044160">
        <id>Q15631</id>
    </interactant>
    <interactant intactId="EBI-1044160">
        <id>Q15631</id>
        <label>TSN</label>
    </interactant>
    <organismsDiffer>false</organismsDiffer>
    <experiments>4</experiments>
</comment>
<comment type="interaction">
    <interactant intactId="EBI-1044160">
        <id>Q15631</id>
    </interactant>
    <interactant intactId="EBI-21353855">
        <id>Q99598</id>
        <label>TSNAX</label>
    </interactant>
    <organismsDiffer>false</organismsDiffer>
    <experiments>16</experiments>
</comment>
<comment type="interaction">
    <interactant intactId="EBI-1044160">
        <id>Q15631</id>
    </interactant>
    <interactant intactId="EBI-10180829">
        <id>Q7KZS0</id>
        <label>UBE2I</label>
    </interactant>
    <organismsDiffer>false</organismsDiffer>
    <experiments>3</experiments>
</comment>
<comment type="interaction">
    <interactant intactId="EBI-1044160">
        <id>Q15631</id>
    </interactant>
    <interactant intactId="EBI-473850">
        <id>P61086</id>
        <label>UBE2K</label>
    </interactant>
    <organismsDiffer>false</organismsDiffer>
    <experiments>3</experiments>
</comment>
<comment type="subcellular location">
    <subcellularLocation>
        <location evidence="3">Cytoplasm</location>
    </subcellularLocation>
    <subcellularLocation>
        <location evidence="3">Nucleus</location>
    </subcellularLocation>
</comment>
<comment type="alternative products">
    <event type="alternative splicing"/>
    <isoform>
        <id>Q15631-1</id>
        <name>1</name>
        <sequence type="displayed"/>
    </isoform>
    <isoform>
        <id>Q15631-2</id>
        <name>2</name>
        <sequence type="described" ref="VSP_044937 VSP_044938"/>
    </isoform>
</comment>
<comment type="similarity">
    <text evidence="8">Belongs to the translin family.</text>
</comment>
<sequence>MSVSEIFVELQGFLAAEQDIREEIRKVVQSLEQTAREILTLLQGVHQGAGFQDIPKRCLKAREHFGTVKTHLTSLKTKFPAEQYYRFHEHWRFVLQRLVFLAAFVVYLETETLVTREAVTEILGIEPDREKGFHLDVEDYLSGVLILASELSRLSVNSVTAGDYSRPLHISTFINELDSGFRLLNLKNDSLRKRYDGLKYDVKKVEEVVYDLSIRGFNKETAAACVEK</sequence>
<gene>
    <name evidence="9" type="primary">TSN</name>
</gene>
<protein>
    <recommendedName>
        <fullName evidence="8">Translin</fullName>
        <ecNumber evidence="1">3.1.-.-</ecNumber>
    </recommendedName>
    <alternativeName>
        <fullName evidence="7">Component 3 of promoter of RISC</fullName>
        <shortName evidence="7">C3PO</shortName>
    </alternativeName>
</protein>